<protein>
    <recommendedName>
        <fullName evidence="1">Ribosome-binding factor A</fullName>
    </recommendedName>
</protein>
<feature type="chain" id="PRO_1000000156" description="Ribosome-binding factor A">
    <location>
        <begin position="1"/>
        <end position="127"/>
    </location>
</feature>
<gene>
    <name evidence="1" type="primary">rbfA</name>
    <name type="ordered locus">Noc_2119</name>
</gene>
<name>RBFA_NITOC</name>
<dbReference type="EMBL" id="CP000127">
    <property type="protein sequence ID" value="ABA58579.1"/>
    <property type="molecule type" value="Genomic_DNA"/>
</dbReference>
<dbReference type="RefSeq" id="WP_002809595.1">
    <property type="nucleotide sequence ID" value="NC_007484.1"/>
</dbReference>
<dbReference type="SMR" id="Q3J9B7"/>
<dbReference type="FunCoup" id="Q3J9B7">
    <property type="interactions" value="472"/>
</dbReference>
<dbReference type="STRING" id="323261.Noc_2119"/>
<dbReference type="KEGG" id="noc:Noc_2119"/>
<dbReference type="eggNOG" id="COG0858">
    <property type="taxonomic scope" value="Bacteria"/>
</dbReference>
<dbReference type="HOGENOM" id="CLU_089475_5_1_6"/>
<dbReference type="InParanoid" id="Q3J9B7"/>
<dbReference type="Proteomes" id="UP000006838">
    <property type="component" value="Chromosome"/>
</dbReference>
<dbReference type="GO" id="GO:0005829">
    <property type="term" value="C:cytosol"/>
    <property type="evidence" value="ECO:0007669"/>
    <property type="project" value="TreeGrafter"/>
</dbReference>
<dbReference type="GO" id="GO:0043024">
    <property type="term" value="F:ribosomal small subunit binding"/>
    <property type="evidence" value="ECO:0007669"/>
    <property type="project" value="TreeGrafter"/>
</dbReference>
<dbReference type="GO" id="GO:0030490">
    <property type="term" value="P:maturation of SSU-rRNA"/>
    <property type="evidence" value="ECO:0007669"/>
    <property type="project" value="UniProtKB-UniRule"/>
</dbReference>
<dbReference type="Gene3D" id="3.30.300.20">
    <property type="match status" value="1"/>
</dbReference>
<dbReference type="HAMAP" id="MF_00003">
    <property type="entry name" value="RbfA"/>
    <property type="match status" value="1"/>
</dbReference>
<dbReference type="InterPro" id="IPR015946">
    <property type="entry name" value="KH_dom-like_a/b"/>
</dbReference>
<dbReference type="InterPro" id="IPR000238">
    <property type="entry name" value="RbfA"/>
</dbReference>
<dbReference type="InterPro" id="IPR023799">
    <property type="entry name" value="RbfA_dom_sf"/>
</dbReference>
<dbReference type="InterPro" id="IPR020053">
    <property type="entry name" value="Ribosome-bd_factorA_CS"/>
</dbReference>
<dbReference type="NCBIfam" id="TIGR00082">
    <property type="entry name" value="rbfA"/>
    <property type="match status" value="1"/>
</dbReference>
<dbReference type="PANTHER" id="PTHR33515">
    <property type="entry name" value="RIBOSOME-BINDING FACTOR A, CHLOROPLASTIC-RELATED"/>
    <property type="match status" value="1"/>
</dbReference>
<dbReference type="PANTHER" id="PTHR33515:SF1">
    <property type="entry name" value="RIBOSOME-BINDING FACTOR A, CHLOROPLASTIC-RELATED"/>
    <property type="match status" value="1"/>
</dbReference>
<dbReference type="Pfam" id="PF02033">
    <property type="entry name" value="RBFA"/>
    <property type="match status" value="1"/>
</dbReference>
<dbReference type="SUPFAM" id="SSF89919">
    <property type="entry name" value="Ribosome-binding factor A, RbfA"/>
    <property type="match status" value="1"/>
</dbReference>
<dbReference type="PROSITE" id="PS01319">
    <property type="entry name" value="RBFA"/>
    <property type="match status" value="1"/>
</dbReference>
<comment type="function">
    <text evidence="1">One of several proteins that assist in the late maturation steps of the functional core of the 30S ribosomal subunit. Associates with free 30S ribosomal subunits (but not with 30S subunits that are part of 70S ribosomes or polysomes). Required for efficient processing of 16S rRNA. May interact with the 5'-terminal helix region of 16S rRNA.</text>
</comment>
<comment type="subunit">
    <text evidence="1">Monomer. Binds 30S ribosomal subunits, but not 50S ribosomal subunits or 70S ribosomes.</text>
</comment>
<comment type="subcellular location">
    <subcellularLocation>
        <location evidence="1">Cytoplasm</location>
    </subcellularLocation>
</comment>
<comment type="similarity">
    <text evidence="1">Belongs to the RbfA family.</text>
</comment>
<organism>
    <name type="scientific">Nitrosococcus oceani (strain ATCC 19707 / BCRC 17464 / JCM 30415 / NCIMB 11848 / C-107)</name>
    <dbReference type="NCBI Taxonomy" id="323261"/>
    <lineage>
        <taxon>Bacteria</taxon>
        <taxon>Pseudomonadati</taxon>
        <taxon>Pseudomonadota</taxon>
        <taxon>Gammaproteobacteria</taxon>
        <taxon>Chromatiales</taxon>
        <taxon>Chromatiaceae</taxon>
        <taxon>Nitrosococcus</taxon>
    </lineage>
</organism>
<sequence length="127" mass="14581">MSQEFSRARRVGELLQRELARLFQEELKDPRVKLVTVSHVRVSPDLRQAKAYVTFLGKEEDTQEQLAVLNKAAGFLQHGLSQRVELRVIPRLQFVYDDSIERGRRLSALIDKAVQKETDGESDNSTE</sequence>
<evidence type="ECO:0000255" key="1">
    <source>
        <dbReference type="HAMAP-Rule" id="MF_00003"/>
    </source>
</evidence>
<keyword id="KW-0963">Cytoplasm</keyword>
<keyword id="KW-1185">Reference proteome</keyword>
<keyword id="KW-0690">Ribosome biogenesis</keyword>
<accession>Q3J9B7</accession>
<reference key="1">
    <citation type="journal article" date="2006" name="Appl. Environ. Microbiol.">
        <title>Complete genome sequence of the marine, chemolithoautotrophic, ammonia-oxidizing bacterium Nitrosococcus oceani ATCC 19707.</title>
        <authorList>
            <person name="Klotz M.G."/>
            <person name="Arp D.J."/>
            <person name="Chain P.S.G."/>
            <person name="El-Sheikh A.F."/>
            <person name="Hauser L.J."/>
            <person name="Hommes N.G."/>
            <person name="Larimer F.W."/>
            <person name="Malfatti S.A."/>
            <person name="Norton J.M."/>
            <person name="Poret-Peterson A.T."/>
            <person name="Vergez L.M."/>
            <person name="Ward B.B."/>
        </authorList>
    </citation>
    <scope>NUCLEOTIDE SEQUENCE [LARGE SCALE GENOMIC DNA]</scope>
    <source>
        <strain>ATCC 19707 / BCRC 17464 / JCM 30415 / NCIMB 11848 / C-107</strain>
    </source>
</reference>
<proteinExistence type="inferred from homology"/>